<organism>
    <name type="scientific">Paracoccus denitrificans (strain Pd 1222)</name>
    <dbReference type="NCBI Taxonomy" id="318586"/>
    <lineage>
        <taxon>Bacteria</taxon>
        <taxon>Pseudomonadati</taxon>
        <taxon>Pseudomonadota</taxon>
        <taxon>Alphaproteobacteria</taxon>
        <taxon>Rhodobacterales</taxon>
        <taxon>Paracoccaceae</taxon>
        <taxon>Paracoccus</taxon>
    </lineage>
</organism>
<sequence length="66" mass="7362">MPKMKTKSAAKKRFSMTATGKVKAGPAGKRHGMIKRSTKFIRDVTGTMILSDADAKIVKKYMPYNR</sequence>
<gene>
    <name evidence="1" type="primary">rpmI</name>
    <name type="ordered locus">Pden_2274</name>
</gene>
<keyword id="KW-1185">Reference proteome</keyword>
<keyword id="KW-0687">Ribonucleoprotein</keyword>
<keyword id="KW-0689">Ribosomal protein</keyword>
<dbReference type="EMBL" id="CP000489">
    <property type="protein sequence ID" value="ABL70366.1"/>
    <property type="molecule type" value="Genomic_DNA"/>
</dbReference>
<dbReference type="RefSeq" id="WP_010398741.1">
    <property type="nucleotide sequence ID" value="NC_008686.1"/>
</dbReference>
<dbReference type="SMR" id="A1B4C2"/>
<dbReference type="STRING" id="318586.Pden_2274"/>
<dbReference type="EnsemblBacteria" id="ABL70366">
    <property type="protein sequence ID" value="ABL70366"/>
    <property type="gene ID" value="Pden_2274"/>
</dbReference>
<dbReference type="GeneID" id="93450673"/>
<dbReference type="KEGG" id="pde:Pden_2274"/>
<dbReference type="eggNOG" id="COG0291">
    <property type="taxonomic scope" value="Bacteria"/>
</dbReference>
<dbReference type="HOGENOM" id="CLU_169643_2_1_5"/>
<dbReference type="OrthoDB" id="9804851at2"/>
<dbReference type="Proteomes" id="UP000000361">
    <property type="component" value="Chromosome 1"/>
</dbReference>
<dbReference type="GO" id="GO:0022625">
    <property type="term" value="C:cytosolic large ribosomal subunit"/>
    <property type="evidence" value="ECO:0007669"/>
    <property type="project" value="TreeGrafter"/>
</dbReference>
<dbReference type="GO" id="GO:0003735">
    <property type="term" value="F:structural constituent of ribosome"/>
    <property type="evidence" value="ECO:0007669"/>
    <property type="project" value="InterPro"/>
</dbReference>
<dbReference type="GO" id="GO:0006412">
    <property type="term" value="P:translation"/>
    <property type="evidence" value="ECO:0007669"/>
    <property type="project" value="UniProtKB-UniRule"/>
</dbReference>
<dbReference type="FunFam" id="4.10.410.60:FF:000001">
    <property type="entry name" value="50S ribosomal protein L35"/>
    <property type="match status" value="1"/>
</dbReference>
<dbReference type="Gene3D" id="4.10.410.60">
    <property type="match status" value="1"/>
</dbReference>
<dbReference type="HAMAP" id="MF_00514">
    <property type="entry name" value="Ribosomal_bL35"/>
    <property type="match status" value="1"/>
</dbReference>
<dbReference type="InterPro" id="IPR001706">
    <property type="entry name" value="Ribosomal_bL35"/>
</dbReference>
<dbReference type="InterPro" id="IPR021137">
    <property type="entry name" value="Ribosomal_bL35-like"/>
</dbReference>
<dbReference type="InterPro" id="IPR018265">
    <property type="entry name" value="Ribosomal_bL35_CS"/>
</dbReference>
<dbReference type="InterPro" id="IPR037229">
    <property type="entry name" value="Ribosomal_bL35_sf"/>
</dbReference>
<dbReference type="NCBIfam" id="TIGR00001">
    <property type="entry name" value="rpmI_bact"/>
    <property type="match status" value="1"/>
</dbReference>
<dbReference type="PANTHER" id="PTHR33343">
    <property type="entry name" value="54S RIBOSOMAL PROTEIN BL35M"/>
    <property type="match status" value="1"/>
</dbReference>
<dbReference type="PANTHER" id="PTHR33343:SF1">
    <property type="entry name" value="LARGE RIBOSOMAL SUBUNIT PROTEIN BL35M"/>
    <property type="match status" value="1"/>
</dbReference>
<dbReference type="Pfam" id="PF01632">
    <property type="entry name" value="Ribosomal_L35p"/>
    <property type="match status" value="1"/>
</dbReference>
<dbReference type="PRINTS" id="PR00064">
    <property type="entry name" value="RIBOSOMALL35"/>
</dbReference>
<dbReference type="SUPFAM" id="SSF143034">
    <property type="entry name" value="L35p-like"/>
    <property type="match status" value="1"/>
</dbReference>
<dbReference type="PROSITE" id="PS00936">
    <property type="entry name" value="RIBOSOMAL_L35"/>
    <property type="match status" value="1"/>
</dbReference>
<comment type="similarity">
    <text evidence="1">Belongs to the bacterial ribosomal protein bL35 family.</text>
</comment>
<evidence type="ECO:0000255" key="1">
    <source>
        <dbReference type="HAMAP-Rule" id="MF_00514"/>
    </source>
</evidence>
<evidence type="ECO:0000256" key="2">
    <source>
        <dbReference type="SAM" id="MobiDB-lite"/>
    </source>
</evidence>
<evidence type="ECO:0000305" key="3"/>
<name>RL35_PARDP</name>
<protein>
    <recommendedName>
        <fullName evidence="1">Large ribosomal subunit protein bL35</fullName>
    </recommendedName>
    <alternativeName>
        <fullName evidence="3">50S ribosomal protein L35</fullName>
    </alternativeName>
</protein>
<reference key="1">
    <citation type="submission" date="2006-12" db="EMBL/GenBank/DDBJ databases">
        <title>Complete sequence of chromosome 1 of Paracoccus denitrificans PD1222.</title>
        <authorList>
            <person name="Copeland A."/>
            <person name="Lucas S."/>
            <person name="Lapidus A."/>
            <person name="Barry K."/>
            <person name="Detter J.C."/>
            <person name="Glavina del Rio T."/>
            <person name="Hammon N."/>
            <person name="Israni S."/>
            <person name="Dalin E."/>
            <person name="Tice H."/>
            <person name="Pitluck S."/>
            <person name="Munk A.C."/>
            <person name="Brettin T."/>
            <person name="Bruce D."/>
            <person name="Han C."/>
            <person name="Tapia R."/>
            <person name="Gilna P."/>
            <person name="Schmutz J."/>
            <person name="Larimer F."/>
            <person name="Land M."/>
            <person name="Hauser L."/>
            <person name="Kyrpides N."/>
            <person name="Lykidis A."/>
            <person name="Spiro S."/>
            <person name="Richardson D.J."/>
            <person name="Moir J.W.B."/>
            <person name="Ferguson S.J."/>
            <person name="van Spanning R.J.M."/>
            <person name="Richardson P."/>
        </authorList>
    </citation>
    <scope>NUCLEOTIDE SEQUENCE [LARGE SCALE GENOMIC DNA]</scope>
    <source>
        <strain>Pd 1222</strain>
    </source>
</reference>
<feature type="chain" id="PRO_1000050734" description="Large ribosomal subunit protein bL35">
    <location>
        <begin position="1"/>
        <end position="66"/>
    </location>
</feature>
<feature type="region of interest" description="Disordered" evidence="2">
    <location>
        <begin position="1"/>
        <end position="34"/>
    </location>
</feature>
<feature type="compositionally biased region" description="Basic residues" evidence="2">
    <location>
        <begin position="1"/>
        <end position="14"/>
    </location>
</feature>
<accession>A1B4C2</accession>
<proteinExistence type="inferred from homology"/>